<evidence type="ECO:0000250" key="1">
    <source>
        <dbReference type="UniProtKB" id="B3VZU4"/>
    </source>
</evidence>
<evidence type="ECO:0000255" key="2"/>
<evidence type="ECO:0000269" key="3">
    <source>
    </source>
</evidence>
<evidence type="ECO:0000303" key="4">
    <source>
    </source>
</evidence>
<evidence type="ECO:0000305" key="5"/>
<evidence type="ECO:0000305" key="6">
    <source>
    </source>
</evidence>
<evidence type="ECO:0000312" key="7">
    <source>
        <dbReference type="EMBL" id="CAI99628.1"/>
    </source>
</evidence>
<sequence length="62" mass="7286">MLTLKKSMLLIFFLGTINFSLCEQERNADEEERRDEPEERDVEVQKRILPFLAGLFSKILGK</sequence>
<comment type="function">
    <text evidence="1">Antimicrobial peptide.</text>
</comment>
<comment type="subcellular location">
    <subcellularLocation>
        <location evidence="2 3">Secreted</location>
    </subcellularLocation>
</comment>
<comment type="tissue specificity">
    <text evidence="6">Expressed by the skin glands.</text>
</comment>
<comment type="mass spectrometry" mass="1431.01" method="MALDI" evidence="3"/>
<comment type="similarity">
    <text evidence="5">Belongs to the frog skin active peptide (FSAP) family. Brevinin subfamily.</text>
</comment>
<protein>
    <recommendedName>
        <fullName evidence="4">Pelophylaxin-4</fullName>
    </recommendedName>
</protein>
<feature type="signal peptide" evidence="2">
    <location>
        <begin position="1"/>
        <end position="22"/>
    </location>
</feature>
<feature type="propeptide" id="PRO_0000439446" evidence="6">
    <location>
        <begin position="23"/>
        <end position="45"/>
    </location>
</feature>
<feature type="peptide" id="PRO_0000439447" description="Pelophylaxin-4" evidence="3">
    <location>
        <begin position="48"/>
        <end position="60"/>
    </location>
</feature>
<feature type="propeptide" id="PRO_0000439448" evidence="6">
    <location>
        <position position="61"/>
    </location>
</feature>
<feature type="modified residue" description="Leucine amide" evidence="4">
    <location>
        <position position="60"/>
    </location>
</feature>
<accession>Q2WCN5</accession>
<name>PELO4_PELFU</name>
<keyword id="KW-0027">Amidation</keyword>
<keyword id="KW-0878">Amphibian defense peptide</keyword>
<keyword id="KW-0929">Antimicrobial</keyword>
<keyword id="KW-0165">Cleavage on pair of basic residues</keyword>
<keyword id="KW-0903">Direct protein sequencing</keyword>
<keyword id="KW-0964">Secreted</keyword>
<keyword id="KW-0732">Signal</keyword>
<reference evidence="7" key="1">
    <citation type="journal article" date="2006" name="Peptides">
        <title>Pelophylaxins: novel antimicrobial peptide homologs from the skin secretion of the Fukien gold-striped pond frog, Pelophylax plancyi fukienensis: identification by 'shotgun' cDNA cloning and sequence analysis.</title>
        <authorList>
            <person name="Zhou M."/>
            <person name="Chen T."/>
            <person name="Walker B."/>
            <person name="Shaw C."/>
        </authorList>
    </citation>
    <scope>NUCLEOTIDE SEQUENCE [MRNA]</scope>
    <scope>PROTEIN SEQUENCE OF 48-60</scope>
    <scope>AMIDATION AT LEU-60</scope>
    <scope>SUBCELLULAR LOCATION</scope>
    <scope>MASS SPECTROMETRY</scope>
    <scope>IDENTIFICATION BY MASS SPECTROMETRY</scope>
    <source>
        <tissue evidence="4">Skin secretion</tissue>
    </source>
</reference>
<organism evidence="7">
    <name type="scientific">Pelophylax fukienensis</name>
    <name type="common">Fukien gold-striped pond frog</name>
    <name type="synonym">Rana fukienensis</name>
    <dbReference type="NCBI Taxonomy" id="88448"/>
    <lineage>
        <taxon>Eukaryota</taxon>
        <taxon>Metazoa</taxon>
        <taxon>Chordata</taxon>
        <taxon>Craniata</taxon>
        <taxon>Vertebrata</taxon>
        <taxon>Euteleostomi</taxon>
        <taxon>Amphibia</taxon>
        <taxon>Batrachia</taxon>
        <taxon>Anura</taxon>
        <taxon>Neobatrachia</taxon>
        <taxon>Ranoidea</taxon>
        <taxon>Ranidae</taxon>
        <taxon>Pelophylax</taxon>
    </lineage>
</organism>
<dbReference type="EMBL" id="AJ972870">
    <property type="protein sequence ID" value="CAI99628.1"/>
    <property type="molecule type" value="mRNA"/>
</dbReference>
<dbReference type="GO" id="GO:0005576">
    <property type="term" value="C:extracellular region"/>
    <property type="evidence" value="ECO:0007669"/>
    <property type="project" value="UniProtKB-SubCell"/>
</dbReference>
<dbReference type="GO" id="GO:0006952">
    <property type="term" value="P:defense response"/>
    <property type="evidence" value="ECO:0007669"/>
    <property type="project" value="UniProtKB-KW"/>
</dbReference>
<dbReference type="InterPro" id="IPR004275">
    <property type="entry name" value="Frog_antimicrobial_propeptide"/>
</dbReference>
<dbReference type="Pfam" id="PF03032">
    <property type="entry name" value="FSAP_sig_propep"/>
    <property type="match status" value="1"/>
</dbReference>
<proteinExistence type="evidence at protein level"/>